<name>ZNF77_HUMAN</name>
<protein>
    <recommendedName>
        <fullName>Zinc finger protein 77</fullName>
    </recommendedName>
    <alternativeName>
        <fullName>ZNFpT1</fullName>
    </alternativeName>
</protein>
<keyword id="KW-0238">DNA-binding</keyword>
<keyword id="KW-0479">Metal-binding</keyword>
<keyword id="KW-0539">Nucleus</keyword>
<keyword id="KW-1267">Proteomics identification</keyword>
<keyword id="KW-1185">Reference proteome</keyword>
<keyword id="KW-0677">Repeat</keyword>
<keyword id="KW-0804">Transcription</keyword>
<keyword id="KW-0805">Transcription regulation</keyword>
<keyword id="KW-0862">Zinc</keyword>
<keyword id="KW-0863">Zinc-finger</keyword>
<feature type="chain" id="PRO_0000047387" description="Zinc finger protein 77">
    <location>
        <begin position="1"/>
        <end position="545"/>
    </location>
</feature>
<feature type="domain" description="KRAB" evidence="2">
    <location>
        <begin position="4"/>
        <end position="99"/>
    </location>
</feature>
<feature type="zinc finger region" description="C2H2-type 1" evidence="1">
    <location>
        <begin position="212"/>
        <end position="234"/>
    </location>
</feature>
<feature type="zinc finger region" description="C2H2-type 2" evidence="1">
    <location>
        <begin position="240"/>
        <end position="262"/>
    </location>
</feature>
<feature type="zinc finger region" description="C2H2-type 3" evidence="1">
    <location>
        <begin position="268"/>
        <end position="290"/>
    </location>
</feature>
<feature type="zinc finger region" description="C2H2-type 4" evidence="1">
    <location>
        <begin position="296"/>
        <end position="318"/>
    </location>
</feature>
<feature type="zinc finger region" description="C2H2-type 5" evidence="1">
    <location>
        <begin position="324"/>
        <end position="346"/>
    </location>
</feature>
<feature type="zinc finger region" description="C2H2-type 6" evidence="1">
    <location>
        <begin position="352"/>
        <end position="374"/>
    </location>
</feature>
<feature type="zinc finger region" description="C2H2-type 7" evidence="1">
    <location>
        <begin position="380"/>
        <end position="402"/>
    </location>
</feature>
<feature type="zinc finger region" description="C2H2-type 8" evidence="1">
    <location>
        <begin position="408"/>
        <end position="430"/>
    </location>
</feature>
<feature type="zinc finger region" description="C2H2-type 9" evidence="1">
    <location>
        <begin position="436"/>
        <end position="458"/>
    </location>
</feature>
<feature type="zinc finger region" description="C2H2-type 10" evidence="1">
    <location>
        <begin position="464"/>
        <end position="486"/>
    </location>
</feature>
<feature type="zinc finger region" description="C2H2-type 11" evidence="1">
    <location>
        <begin position="492"/>
        <end position="514"/>
    </location>
</feature>
<feature type="zinc finger region" description="C2H2-type 12" evidence="1">
    <location>
        <begin position="520"/>
        <end position="542"/>
    </location>
</feature>
<feature type="sequence variant" id="VAR_052764" description="In dbSNP:rs12610412.">
    <original>C</original>
    <variation>S</variation>
    <location>
        <position position="3"/>
    </location>
</feature>
<feature type="sequence variant" id="VAR_059895" description="In dbSNP:rs12609268.">
    <original>I</original>
    <variation>V</variation>
    <location>
        <position position="5"/>
    </location>
</feature>
<feature type="sequence variant" id="VAR_033549" description="In dbSNP:rs34603238.">
    <original>L</original>
    <variation>W</variation>
    <location>
        <position position="20"/>
    </location>
</feature>
<feature type="sequence variant" id="VAR_033550" description="In dbSNP:rs34705382.">
    <original>P</original>
    <variation>S</variation>
    <location>
        <position position="179"/>
    </location>
</feature>
<feature type="sequence variant" id="VAR_033551" description="In dbSNP:rs35411355.">
    <original>G</original>
    <variation>R</variation>
    <location>
        <position position="460"/>
    </location>
</feature>
<feature type="sequence conflict" description="In Ref. 2; CAA46337." evidence="3" ref="2">
    <original>T</original>
    <variation>R</variation>
    <location>
        <position position="201"/>
    </location>
</feature>
<organism>
    <name type="scientific">Homo sapiens</name>
    <name type="common">Human</name>
    <dbReference type="NCBI Taxonomy" id="9606"/>
    <lineage>
        <taxon>Eukaryota</taxon>
        <taxon>Metazoa</taxon>
        <taxon>Chordata</taxon>
        <taxon>Craniata</taxon>
        <taxon>Vertebrata</taxon>
        <taxon>Euteleostomi</taxon>
        <taxon>Mammalia</taxon>
        <taxon>Eutheria</taxon>
        <taxon>Euarchontoglires</taxon>
        <taxon>Primates</taxon>
        <taxon>Haplorrhini</taxon>
        <taxon>Catarrhini</taxon>
        <taxon>Hominidae</taxon>
        <taxon>Homo</taxon>
    </lineage>
</organism>
<comment type="function">
    <text>May be involved in transcriptional regulation.</text>
</comment>
<comment type="interaction">
    <interactant intactId="EBI-12840750">
        <id>Q15935</id>
    </interactant>
    <interactant intactId="EBI-18138793">
        <id>Q9C0B1-2</id>
        <label>FTO</label>
    </interactant>
    <organismsDiffer>false</organismsDiffer>
    <experiments>3</experiments>
</comment>
<comment type="interaction">
    <interactant intactId="EBI-12840750">
        <id>Q15935</id>
    </interactant>
    <interactant intactId="EBI-12516603">
        <id>Q8WWY6</id>
        <label>MBD3L1</label>
    </interactant>
    <organismsDiffer>false</organismsDiffer>
    <experiments>3</experiments>
</comment>
<comment type="interaction">
    <interactant intactId="EBI-12840750">
        <id>Q15935</id>
    </interactant>
    <interactant intactId="EBI-8487781">
        <id>Q8N6F8</id>
        <label>METTL27</label>
    </interactant>
    <organismsDiffer>false</organismsDiffer>
    <experiments>3</experiments>
</comment>
<comment type="interaction">
    <interactant intactId="EBI-12840750">
        <id>Q15935</id>
    </interactant>
    <interactant intactId="EBI-13324229">
        <id>Q9BSH3</id>
        <label>NICN1</label>
    </interactant>
    <organismsDiffer>false</organismsDiffer>
    <experiments>3</experiments>
</comment>
<comment type="interaction">
    <interactant intactId="EBI-12840750">
        <id>Q15935</id>
    </interactant>
    <interactant intactId="EBI-748336">
        <id>P30048</id>
        <label>PRDX3</label>
    </interactant>
    <organismsDiffer>false</organismsDiffer>
    <experiments>3</experiments>
</comment>
<comment type="interaction">
    <interactant intactId="EBI-12840750">
        <id>Q15935</id>
    </interactant>
    <interactant intactId="EBI-12821217">
        <id>Q2I0M5</id>
        <label>RSPO4</label>
    </interactant>
    <organismsDiffer>false</organismsDiffer>
    <experiments>3</experiments>
</comment>
<comment type="interaction">
    <interactant intactId="EBI-12840750">
        <id>Q15935</id>
    </interactant>
    <interactant intactId="EBI-6257312">
        <id>Q9BVN2</id>
        <label>RUSC1</label>
    </interactant>
    <organismsDiffer>false</organismsDiffer>
    <experiments>3</experiments>
</comment>
<comment type="subcellular location">
    <subcellularLocation>
        <location evidence="3">Nucleus</location>
    </subcellularLocation>
</comment>
<comment type="similarity">
    <text evidence="3">Belongs to the krueppel C2H2-type zinc-finger protein family.</text>
</comment>
<comment type="sequence caution" evidence="3">
    <conflict type="frameshift">
        <sequence resource="EMBL-CDS" id="CAA46337"/>
    </conflict>
</comment>
<sequence>MDCVIFEEVAVNFTPEEWALLDHAQRSLYRDVMLETCRNLASLDCYIYVRTSGSSSQRDVFGNGISNDEEIVKFTGSDSWSIFGENWRFDNTGDQHQIPQRHLRSQLGRLCESNEGHQCGETLSQTANLLVHKSYPTEAKPSECTKCGKAFENRQRSHTGQRPCKECGQACSCLSCQSPPMKTQTVEKPCNCQDSRTASVTYVKSLSSKKSYECQKCGKAFICPSSFRGHVNSHHGQKTHACKVCGKTFMYYSYLTRHVRTHTGEKPYECKECGKAFSCPSYFREHVRTHTGEKPYECKHCGKSFSCYSSFRDHVRTHTGEKPCQCKHCGKAFTCYSSLREHGRTHSGEKPYECKECGKAFRYPSSLRAHMRMHTGEKPYVCKQCGKAFGCPTYFRRHVKTHSGVKPYQCKECGKAYSFSSSLRIHVRTHTGEKPFECKHCGKAFSCHSSLREHVRTHSGEKPYECNQCGKAFSHAQYFQKHVRSHSGVKPYECTECGKAYSCSSSLRVHVRTHTGERPYECKQCGKTFRYLASLQAHVRTHAGA</sequence>
<accession>Q15935</accession>
<accession>Q86XJ3</accession>
<accession>Q9NPP0</accession>
<reference key="1">
    <citation type="journal article" date="2004" name="Genome Res.">
        <title>The status, quality, and expansion of the NIH full-length cDNA project: the Mammalian Gene Collection (MGC).</title>
        <authorList>
            <consortium name="The MGC Project Team"/>
        </authorList>
    </citation>
    <scope>NUCLEOTIDE SEQUENCE [LARGE SCALE MRNA]</scope>
    <source>
        <tissue>Ovary</tissue>
        <tissue>Testis</tissue>
    </source>
</reference>
<reference key="2">
    <citation type="journal article" date="1993" name="Hum. Genet.">
        <title>Chromosomal localization of four human zinc finger cDNAs.</title>
        <authorList>
            <person name="Huebner K."/>
            <person name="Druck T."/>
            <person name="LaForgia S."/>
            <person name="Lasota J."/>
            <person name="Croce C.M."/>
            <person name="Lanfrancone L."/>
            <person name="Donti E."/>
            <person name="Pengue G."/>
            <person name="la Mantia G."/>
            <person name="Pelicci P.-G."/>
            <person name="Lania L."/>
        </authorList>
    </citation>
    <scope>NUCLEOTIDE SEQUENCE [MRNA] OF 93-321</scope>
</reference>
<reference key="3">
    <citation type="submission" date="2000-07" db="EMBL/GenBank/DDBJ databases">
        <authorList>
            <consortium name="The European IMAGE consortium"/>
        </authorList>
    </citation>
    <scope>NUCLEOTIDE SEQUENCE [LARGE SCALE MRNA] OF 270-545</scope>
</reference>
<proteinExistence type="evidence at protein level"/>
<evidence type="ECO:0000255" key="1">
    <source>
        <dbReference type="PROSITE-ProRule" id="PRU00042"/>
    </source>
</evidence>
<evidence type="ECO:0000255" key="2">
    <source>
        <dbReference type="PROSITE-ProRule" id="PRU00119"/>
    </source>
</evidence>
<evidence type="ECO:0000305" key="3"/>
<gene>
    <name type="primary">ZNF77</name>
</gene>
<dbReference type="EMBL" id="BC043354">
    <property type="protein sequence ID" value="AAH43354.2"/>
    <property type="molecule type" value="mRNA"/>
</dbReference>
<dbReference type="EMBL" id="BC062561">
    <property type="protein sequence ID" value="AAH62561.1"/>
    <property type="molecule type" value="mRNA"/>
</dbReference>
<dbReference type="EMBL" id="X65230">
    <property type="protein sequence ID" value="CAA46337.1"/>
    <property type="status" value="ALT_FRAME"/>
    <property type="molecule type" value="mRNA"/>
</dbReference>
<dbReference type="EMBL" id="AL365370">
    <property type="protein sequence ID" value="CAB96946.1"/>
    <property type="molecule type" value="mRNA"/>
</dbReference>
<dbReference type="CCDS" id="CCDS12099.1"/>
<dbReference type="PIR" id="I39313">
    <property type="entry name" value="I39313"/>
</dbReference>
<dbReference type="RefSeq" id="NP_067040.1">
    <property type="nucleotide sequence ID" value="NM_021217.3"/>
</dbReference>
<dbReference type="SMR" id="Q15935"/>
<dbReference type="BioGRID" id="121822">
    <property type="interactions" value="22"/>
</dbReference>
<dbReference type="FunCoup" id="Q15935">
    <property type="interactions" value="163"/>
</dbReference>
<dbReference type="IntAct" id="Q15935">
    <property type="interactions" value="15"/>
</dbReference>
<dbReference type="STRING" id="9606.ENSP00000319053"/>
<dbReference type="iPTMnet" id="Q15935"/>
<dbReference type="PhosphoSitePlus" id="Q15935"/>
<dbReference type="BioMuta" id="ZNF77"/>
<dbReference type="DMDM" id="85681869"/>
<dbReference type="jPOST" id="Q15935"/>
<dbReference type="MassIVE" id="Q15935"/>
<dbReference type="PaxDb" id="9606-ENSP00000319053"/>
<dbReference type="PeptideAtlas" id="Q15935"/>
<dbReference type="ProteomicsDB" id="60820"/>
<dbReference type="Antibodypedia" id="10862">
    <property type="antibodies" value="54 antibodies from 15 providers"/>
</dbReference>
<dbReference type="DNASU" id="58492"/>
<dbReference type="Ensembl" id="ENST00000314531.5">
    <property type="protein sequence ID" value="ENSP00000319053.3"/>
    <property type="gene ID" value="ENSG00000175691.9"/>
</dbReference>
<dbReference type="GeneID" id="58492"/>
<dbReference type="KEGG" id="hsa:58492"/>
<dbReference type="MANE-Select" id="ENST00000314531.5">
    <property type="protein sequence ID" value="ENSP00000319053.3"/>
    <property type="RefSeq nucleotide sequence ID" value="NM_021217.3"/>
    <property type="RefSeq protein sequence ID" value="NP_067040.1"/>
</dbReference>
<dbReference type="UCSC" id="uc002lws.5">
    <property type="organism name" value="human"/>
</dbReference>
<dbReference type="AGR" id="HGNC:13150"/>
<dbReference type="CTD" id="58492"/>
<dbReference type="DisGeNET" id="58492"/>
<dbReference type="GeneCards" id="ZNF77"/>
<dbReference type="HGNC" id="HGNC:13150">
    <property type="gene designation" value="ZNF77"/>
</dbReference>
<dbReference type="HPA" id="ENSG00000175691">
    <property type="expression patterns" value="Low tissue specificity"/>
</dbReference>
<dbReference type="MIM" id="194551">
    <property type="type" value="gene"/>
</dbReference>
<dbReference type="neXtProt" id="NX_Q15935"/>
<dbReference type="OpenTargets" id="ENSG00000175691"/>
<dbReference type="PharmGKB" id="PA37724"/>
<dbReference type="VEuPathDB" id="HostDB:ENSG00000175691"/>
<dbReference type="eggNOG" id="KOG1721">
    <property type="taxonomic scope" value="Eukaryota"/>
</dbReference>
<dbReference type="GeneTree" id="ENSGT00940000162830"/>
<dbReference type="HOGENOM" id="CLU_002678_0_10_1"/>
<dbReference type="InParanoid" id="Q15935"/>
<dbReference type="OMA" id="QQCEKAY"/>
<dbReference type="OrthoDB" id="6077919at2759"/>
<dbReference type="PAN-GO" id="Q15935">
    <property type="GO annotations" value="3 GO annotations based on evolutionary models"/>
</dbReference>
<dbReference type="PhylomeDB" id="Q15935"/>
<dbReference type="TreeFam" id="TF338854"/>
<dbReference type="PathwayCommons" id="Q15935"/>
<dbReference type="Reactome" id="R-HSA-212436">
    <property type="pathway name" value="Generic Transcription Pathway"/>
</dbReference>
<dbReference type="SignaLink" id="Q15935"/>
<dbReference type="BioGRID-ORCS" id="58492">
    <property type="hits" value="10 hits in 1177 CRISPR screens"/>
</dbReference>
<dbReference type="ChiTaRS" id="ZNF77">
    <property type="organism name" value="human"/>
</dbReference>
<dbReference type="GenomeRNAi" id="58492"/>
<dbReference type="Pharos" id="Q15935">
    <property type="development level" value="Tbio"/>
</dbReference>
<dbReference type="PRO" id="PR:Q15935"/>
<dbReference type="Proteomes" id="UP000005640">
    <property type="component" value="Chromosome 19"/>
</dbReference>
<dbReference type="RNAct" id="Q15935">
    <property type="molecule type" value="protein"/>
</dbReference>
<dbReference type="Bgee" id="ENSG00000175691">
    <property type="expression patterns" value="Expressed in oocyte and 122 other cell types or tissues"/>
</dbReference>
<dbReference type="GO" id="GO:0005634">
    <property type="term" value="C:nucleus"/>
    <property type="evidence" value="ECO:0000318"/>
    <property type="project" value="GO_Central"/>
</dbReference>
<dbReference type="GO" id="GO:0000981">
    <property type="term" value="F:DNA-binding transcription factor activity, RNA polymerase II-specific"/>
    <property type="evidence" value="ECO:0000318"/>
    <property type="project" value="GO_Central"/>
</dbReference>
<dbReference type="GO" id="GO:0000977">
    <property type="term" value="F:RNA polymerase II transcription regulatory region sequence-specific DNA binding"/>
    <property type="evidence" value="ECO:0000318"/>
    <property type="project" value="GO_Central"/>
</dbReference>
<dbReference type="GO" id="GO:0008270">
    <property type="term" value="F:zinc ion binding"/>
    <property type="evidence" value="ECO:0007669"/>
    <property type="project" value="UniProtKB-KW"/>
</dbReference>
<dbReference type="GO" id="GO:0006357">
    <property type="term" value="P:regulation of transcription by RNA polymerase II"/>
    <property type="evidence" value="ECO:0000318"/>
    <property type="project" value="GO_Central"/>
</dbReference>
<dbReference type="CDD" id="cd07765">
    <property type="entry name" value="KRAB_A-box"/>
    <property type="match status" value="1"/>
</dbReference>
<dbReference type="FunFam" id="3.30.160.60:FF:000240">
    <property type="entry name" value="Zinc finger protein 250"/>
    <property type="match status" value="1"/>
</dbReference>
<dbReference type="FunFam" id="3.30.160.60:FF:000184">
    <property type="entry name" value="Zinc finger protein 333"/>
    <property type="match status" value="3"/>
</dbReference>
<dbReference type="FunFam" id="3.30.160.60:FF:000338">
    <property type="entry name" value="zinc finger protein 383"/>
    <property type="match status" value="2"/>
</dbReference>
<dbReference type="FunFam" id="3.30.160.60:FF:002254">
    <property type="entry name" value="Zinc finger protein 540"/>
    <property type="match status" value="1"/>
</dbReference>
<dbReference type="FunFam" id="3.30.160.60:FF:000371">
    <property type="entry name" value="Zinc finger protein 555"/>
    <property type="match status" value="2"/>
</dbReference>
<dbReference type="FunFam" id="3.30.160.60:FF:000156">
    <property type="entry name" value="Zinc finger protein 568"/>
    <property type="match status" value="1"/>
</dbReference>
<dbReference type="FunFam" id="3.30.160.60:FF:003724">
    <property type="entry name" value="Zinc finger protein 77"/>
    <property type="match status" value="1"/>
</dbReference>
<dbReference type="FunFam" id="3.30.160.60:FF:000099">
    <property type="entry name" value="Zinc finger protein 79"/>
    <property type="match status" value="2"/>
</dbReference>
<dbReference type="Gene3D" id="6.10.140.140">
    <property type="match status" value="1"/>
</dbReference>
<dbReference type="Gene3D" id="3.30.160.60">
    <property type="entry name" value="Classic Zinc Finger"/>
    <property type="match status" value="13"/>
</dbReference>
<dbReference type="InterPro" id="IPR050752">
    <property type="entry name" value="C2H2-ZF_domain"/>
</dbReference>
<dbReference type="InterPro" id="IPR001909">
    <property type="entry name" value="KRAB"/>
</dbReference>
<dbReference type="InterPro" id="IPR036051">
    <property type="entry name" value="KRAB_dom_sf"/>
</dbReference>
<dbReference type="InterPro" id="IPR036236">
    <property type="entry name" value="Znf_C2H2_sf"/>
</dbReference>
<dbReference type="InterPro" id="IPR013087">
    <property type="entry name" value="Znf_C2H2_type"/>
</dbReference>
<dbReference type="PANTHER" id="PTHR24384">
    <property type="entry name" value="FINGER PUTATIVE TRANSCRIPTION FACTOR FAMILY-RELATED"/>
    <property type="match status" value="1"/>
</dbReference>
<dbReference type="PANTHER" id="PTHR24384:SF247">
    <property type="entry name" value="ZINC FINGER PROTEIN 977"/>
    <property type="match status" value="1"/>
</dbReference>
<dbReference type="Pfam" id="PF01352">
    <property type="entry name" value="KRAB"/>
    <property type="match status" value="1"/>
</dbReference>
<dbReference type="Pfam" id="PF00096">
    <property type="entry name" value="zf-C2H2"/>
    <property type="match status" value="6"/>
</dbReference>
<dbReference type="Pfam" id="PF13894">
    <property type="entry name" value="zf-C2H2_4"/>
    <property type="match status" value="1"/>
</dbReference>
<dbReference type="Pfam" id="PF13465">
    <property type="entry name" value="zf-H2C2_2"/>
    <property type="match status" value="1"/>
</dbReference>
<dbReference type="SMART" id="SM00349">
    <property type="entry name" value="KRAB"/>
    <property type="match status" value="1"/>
</dbReference>
<dbReference type="SMART" id="SM00355">
    <property type="entry name" value="ZnF_C2H2"/>
    <property type="match status" value="12"/>
</dbReference>
<dbReference type="SUPFAM" id="SSF57667">
    <property type="entry name" value="beta-beta-alpha zinc fingers"/>
    <property type="match status" value="8"/>
</dbReference>
<dbReference type="SUPFAM" id="SSF109640">
    <property type="entry name" value="KRAB domain (Kruppel-associated box)"/>
    <property type="match status" value="1"/>
</dbReference>
<dbReference type="PROSITE" id="PS50805">
    <property type="entry name" value="KRAB"/>
    <property type="match status" value="1"/>
</dbReference>
<dbReference type="PROSITE" id="PS00028">
    <property type="entry name" value="ZINC_FINGER_C2H2_1"/>
    <property type="match status" value="12"/>
</dbReference>
<dbReference type="PROSITE" id="PS50157">
    <property type="entry name" value="ZINC_FINGER_C2H2_2"/>
    <property type="match status" value="12"/>
</dbReference>